<evidence type="ECO:0000255" key="1">
    <source>
        <dbReference type="HAMAP-Rule" id="MF_01345"/>
    </source>
</evidence>
<evidence type="ECO:0000305" key="2"/>
<name>RS17_AZOC5</name>
<proteinExistence type="inferred from homology"/>
<dbReference type="EMBL" id="AP009384">
    <property type="protein sequence ID" value="BAF88543.1"/>
    <property type="molecule type" value="Genomic_DNA"/>
</dbReference>
<dbReference type="RefSeq" id="WP_012171071.1">
    <property type="nucleotide sequence ID" value="NC_009937.1"/>
</dbReference>
<dbReference type="SMR" id="A8IAQ7"/>
<dbReference type="STRING" id="438753.AZC_2545"/>
<dbReference type="KEGG" id="azc:AZC_2545"/>
<dbReference type="eggNOG" id="COG0186">
    <property type="taxonomic scope" value="Bacteria"/>
</dbReference>
<dbReference type="HOGENOM" id="CLU_073626_1_1_5"/>
<dbReference type="Proteomes" id="UP000000270">
    <property type="component" value="Chromosome"/>
</dbReference>
<dbReference type="GO" id="GO:0022627">
    <property type="term" value="C:cytosolic small ribosomal subunit"/>
    <property type="evidence" value="ECO:0007669"/>
    <property type="project" value="TreeGrafter"/>
</dbReference>
<dbReference type="GO" id="GO:0019843">
    <property type="term" value="F:rRNA binding"/>
    <property type="evidence" value="ECO:0007669"/>
    <property type="project" value="UniProtKB-UniRule"/>
</dbReference>
<dbReference type="GO" id="GO:0003735">
    <property type="term" value="F:structural constituent of ribosome"/>
    <property type="evidence" value="ECO:0007669"/>
    <property type="project" value="InterPro"/>
</dbReference>
<dbReference type="GO" id="GO:0006412">
    <property type="term" value="P:translation"/>
    <property type="evidence" value="ECO:0007669"/>
    <property type="project" value="UniProtKB-UniRule"/>
</dbReference>
<dbReference type="CDD" id="cd00364">
    <property type="entry name" value="Ribosomal_uS17"/>
    <property type="match status" value="1"/>
</dbReference>
<dbReference type="FunFam" id="2.40.50.140:FF:000204">
    <property type="entry name" value="30S ribosomal protein S17"/>
    <property type="match status" value="1"/>
</dbReference>
<dbReference type="Gene3D" id="2.40.50.140">
    <property type="entry name" value="Nucleic acid-binding proteins"/>
    <property type="match status" value="1"/>
</dbReference>
<dbReference type="HAMAP" id="MF_01345_B">
    <property type="entry name" value="Ribosomal_uS17_B"/>
    <property type="match status" value="1"/>
</dbReference>
<dbReference type="InterPro" id="IPR012340">
    <property type="entry name" value="NA-bd_OB-fold"/>
</dbReference>
<dbReference type="InterPro" id="IPR000266">
    <property type="entry name" value="Ribosomal_uS17"/>
</dbReference>
<dbReference type="InterPro" id="IPR019984">
    <property type="entry name" value="Ribosomal_uS17_bact/chlr"/>
</dbReference>
<dbReference type="InterPro" id="IPR019979">
    <property type="entry name" value="Ribosomal_uS17_CS"/>
</dbReference>
<dbReference type="NCBIfam" id="NF004123">
    <property type="entry name" value="PRK05610.1"/>
    <property type="match status" value="1"/>
</dbReference>
<dbReference type="NCBIfam" id="TIGR03635">
    <property type="entry name" value="uS17_bact"/>
    <property type="match status" value="1"/>
</dbReference>
<dbReference type="PANTHER" id="PTHR10744">
    <property type="entry name" value="40S RIBOSOMAL PROTEIN S11 FAMILY MEMBER"/>
    <property type="match status" value="1"/>
</dbReference>
<dbReference type="PANTHER" id="PTHR10744:SF1">
    <property type="entry name" value="SMALL RIBOSOMAL SUBUNIT PROTEIN US17M"/>
    <property type="match status" value="1"/>
</dbReference>
<dbReference type="Pfam" id="PF00366">
    <property type="entry name" value="Ribosomal_S17"/>
    <property type="match status" value="1"/>
</dbReference>
<dbReference type="PRINTS" id="PR00973">
    <property type="entry name" value="RIBOSOMALS17"/>
</dbReference>
<dbReference type="SUPFAM" id="SSF50249">
    <property type="entry name" value="Nucleic acid-binding proteins"/>
    <property type="match status" value="1"/>
</dbReference>
<dbReference type="PROSITE" id="PS00056">
    <property type="entry name" value="RIBOSOMAL_S17"/>
    <property type="match status" value="1"/>
</dbReference>
<accession>A8IAQ7</accession>
<keyword id="KW-1185">Reference proteome</keyword>
<keyword id="KW-0687">Ribonucleoprotein</keyword>
<keyword id="KW-0689">Ribosomal protein</keyword>
<keyword id="KW-0694">RNA-binding</keyword>
<keyword id="KW-0699">rRNA-binding</keyword>
<organism>
    <name type="scientific">Azorhizobium caulinodans (strain ATCC 43989 / DSM 5975 / JCM 20966 / LMG 6465 / NBRC 14845 / NCIMB 13405 / ORS 571)</name>
    <dbReference type="NCBI Taxonomy" id="438753"/>
    <lineage>
        <taxon>Bacteria</taxon>
        <taxon>Pseudomonadati</taxon>
        <taxon>Pseudomonadota</taxon>
        <taxon>Alphaproteobacteria</taxon>
        <taxon>Hyphomicrobiales</taxon>
        <taxon>Xanthobacteraceae</taxon>
        <taxon>Azorhizobium</taxon>
    </lineage>
</organism>
<gene>
    <name evidence="1" type="primary">rpsQ</name>
    <name type="ordered locus">AZC_2545</name>
</gene>
<reference key="1">
    <citation type="submission" date="2007-04" db="EMBL/GenBank/DDBJ databases">
        <title>Complete genome sequence of the nitrogen-fixing bacterium Azorhizobium caulinodans ORS571.</title>
        <authorList>
            <person name="Lee K.B."/>
            <person name="Backer P.D."/>
            <person name="Aono T."/>
            <person name="Liu C.T."/>
            <person name="Suzuki S."/>
            <person name="Suzuki T."/>
            <person name="Kaneko T."/>
            <person name="Yamada M."/>
            <person name="Tabata S."/>
            <person name="Kupfer D.M."/>
            <person name="Najar F.Z."/>
            <person name="Wiley G.B."/>
            <person name="Roe B."/>
            <person name="Binnewies T."/>
            <person name="Ussery D."/>
            <person name="Vereecke D."/>
            <person name="Gevers D."/>
            <person name="Holsters M."/>
            <person name="Oyaizu H."/>
        </authorList>
    </citation>
    <scope>NUCLEOTIDE SEQUENCE [LARGE SCALE GENOMIC DNA]</scope>
    <source>
        <strain>ATCC 43989 / DSM 5975 / JCM 20966 / LMG 6465 / NBRC 14845 / NCIMB 13405 / ORS 571</strain>
    </source>
</reference>
<comment type="function">
    <text evidence="1">One of the primary rRNA binding proteins, it binds specifically to the 5'-end of 16S ribosomal RNA.</text>
</comment>
<comment type="subunit">
    <text evidence="1">Part of the 30S ribosomal subunit.</text>
</comment>
<comment type="similarity">
    <text evidence="1">Belongs to the universal ribosomal protein uS17 family.</text>
</comment>
<protein>
    <recommendedName>
        <fullName evidence="1">Small ribosomal subunit protein uS17</fullName>
    </recommendedName>
    <alternativeName>
        <fullName evidence="2">30S ribosomal protein S17</fullName>
    </alternativeName>
</protein>
<feature type="chain" id="PRO_1000073341" description="Small ribosomal subunit protein uS17">
    <location>
        <begin position="1"/>
        <end position="82"/>
    </location>
</feature>
<sequence>MPKRVLQGVVVSDKQDKTVVVRVERRFTHPLLKKTVRRSKKYHAHDEANTWSIGDTVWIEEHRPLSKLKNWIVVQGEKRAEV</sequence>